<keyword id="KW-1015">Disulfide bond</keyword>
<keyword id="KW-0325">Glycoprotein</keyword>
<keyword id="KW-1199">Hemostasis impairing toxin</keyword>
<keyword id="KW-0378">Hydrolase</keyword>
<keyword id="KW-0645">Protease</keyword>
<keyword id="KW-0964">Secreted</keyword>
<keyword id="KW-0720">Serine protease</keyword>
<keyword id="KW-0732">Signal</keyword>
<keyword id="KW-0800">Toxin</keyword>
<keyword id="KW-0865">Zymogen</keyword>
<protein>
    <recommendedName>
        <fullName>Snake venom serine proteinase 11</fullName>
        <shortName>SVSP</shortName>
        <ecNumber>3.4.21.-</ecNumber>
    </recommendedName>
</protein>
<name>VSPB_CROAD</name>
<feature type="signal peptide" evidence="2">
    <location>
        <begin position="1"/>
        <end position="18"/>
    </location>
</feature>
<feature type="propeptide" id="PRO_0000425643" evidence="1">
    <location>
        <begin position="19"/>
        <end position="24"/>
    </location>
</feature>
<feature type="chain" id="PRO_0000425644" description="Snake venom serine proteinase 11">
    <location>
        <begin position="25"/>
        <end position="257"/>
    </location>
</feature>
<feature type="domain" description="Peptidase S1" evidence="3">
    <location>
        <begin position="25"/>
        <end position="248"/>
    </location>
</feature>
<feature type="active site" description="Charge relay system" evidence="1">
    <location>
        <position position="64"/>
    </location>
</feature>
<feature type="active site" description="Charge relay system" evidence="1">
    <location>
        <position position="109"/>
    </location>
</feature>
<feature type="active site" description="Charge relay system" evidence="1">
    <location>
        <position position="203"/>
    </location>
</feature>
<feature type="glycosylation site" description="N-linked (GlcNAc...) asparagine" evidence="2">
    <location>
        <position position="120"/>
    </location>
</feature>
<feature type="disulfide bond" evidence="3">
    <location>
        <begin position="31"/>
        <end position="162"/>
    </location>
</feature>
<feature type="disulfide bond" evidence="3">
    <location>
        <begin position="49"/>
        <end position="65"/>
    </location>
</feature>
<feature type="disulfide bond" evidence="3">
    <location>
        <begin position="97"/>
        <end position="255"/>
    </location>
</feature>
<feature type="disulfide bond" evidence="3">
    <location>
        <begin position="141"/>
        <end position="209"/>
    </location>
</feature>
<feature type="disulfide bond" evidence="3">
    <location>
        <begin position="173"/>
        <end position="188"/>
    </location>
</feature>
<feature type="disulfide bond" evidence="3">
    <location>
        <begin position="199"/>
        <end position="224"/>
    </location>
</feature>
<comment type="function">
    <text evidence="1">Snake venom serine protease that may act in the hemostasis system of the prey.</text>
</comment>
<comment type="subunit">
    <text evidence="1">Monomer.</text>
</comment>
<comment type="subcellular location">
    <subcellularLocation>
        <location>Secreted</location>
    </subcellularLocation>
</comment>
<comment type="tissue specificity">
    <text>Expressed by the venom gland.</text>
</comment>
<comment type="similarity">
    <text evidence="3">Belongs to the peptidase S1 family. Snake venom subfamily.</text>
</comment>
<dbReference type="EC" id="3.4.21.-"/>
<dbReference type="EMBL" id="JU173722">
    <property type="protein sequence ID" value="AFJ49248.1"/>
    <property type="molecule type" value="mRNA"/>
</dbReference>
<dbReference type="SMR" id="J3S832"/>
<dbReference type="GO" id="GO:0005576">
    <property type="term" value="C:extracellular region"/>
    <property type="evidence" value="ECO:0007669"/>
    <property type="project" value="UniProtKB-SubCell"/>
</dbReference>
<dbReference type="GO" id="GO:0030141">
    <property type="term" value="C:secretory granule"/>
    <property type="evidence" value="ECO:0007669"/>
    <property type="project" value="TreeGrafter"/>
</dbReference>
<dbReference type="GO" id="GO:0004252">
    <property type="term" value="F:serine-type endopeptidase activity"/>
    <property type="evidence" value="ECO:0007669"/>
    <property type="project" value="InterPro"/>
</dbReference>
<dbReference type="GO" id="GO:0090729">
    <property type="term" value="F:toxin activity"/>
    <property type="evidence" value="ECO:0007669"/>
    <property type="project" value="UniProtKB-KW"/>
</dbReference>
<dbReference type="GO" id="GO:0006508">
    <property type="term" value="P:proteolysis"/>
    <property type="evidence" value="ECO:0007669"/>
    <property type="project" value="UniProtKB-KW"/>
</dbReference>
<dbReference type="CDD" id="cd00190">
    <property type="entry name" value="Tryp_SPc"/>
    <property type="match status" value="1"/>
</dbReference>
<dbReference type="FunFam" id="2.40.10.10:FF:000158">
    <property type="entry name" value="Thrombin-like enzyme saxthrombin"/>
    <property type="match status" value="1"/>
</dbReference>
<dbReference type="FunFam" id="2.40.10.10:FF:000153">
    <property type="entry name" value="Venom plasminogen activator TSV-PA"/>
    <property type="match status" value="1"/>
</dbReference>
<dbReference type="Gene3D" id="2.40.10.10">
    <property type="entry name" value="Trypsin-like serine proteases"/>
    <property type="match status" value="2"/>
</dbReference>
<dbReference type="InterPro" id="IPR009003">
    <property type="entry name" value="Peptidase_S1_PA"/>
</dbReference>
<dbReference type="InterPro" id="IPR043504">
    <property type="entry name" value="Peptidase_S1_PA_chymotrypsin"/>
</dbReference>
<dbReference type="InterPro" id="IPR001314">
    <property type="entry name" value="Peptidase_S1A"/>
</dbReference>
<dbReference type="InterPro" id="IPR001254">
    <property type="entry name" value="Trypsin_dom"/>
</dbReference>
<dbReference type="InterPro" id="IPR018114">
    <property type="entry name" value="TRYPSIN_HIS"/>
</dbReference>
<dbReference type="InterPro" id="IPR033116">
    <property type="entry name" value="TRYPSIN_SER"/>
</dbReference>
<dbReference type="PANTHER" id="PTHR24271:SF47">
    <property type="entry name" value="KALLIKREIN-1"/>
    <property type="match status" value="1"/>
</dbReference>
<dbReference type="PANTHER" id="PTHR24271">
    <property type="entry name" value="KALLIKREIN-RELATED"/>
    <property type="match status" value="1"/>
</dbReference>
<dbReference type="Pfam" id="PF00089">
    <property type="entry name" value="Trypsin"/>
    <property type="match status" value="1"/>
</dbReference>
<dbReference type="PRINTS" id="PR00722">
    <property type="entry name" value="CHYMOTRYPSIN"/>
</dbReference>
<dbReference type="SMART" id="SM00020">
    <property type="entry name" value="Tryp_SPc"/>
    <property type="match status" value="1"/>
</dbReference>
<dbReference type="SUPFAM" id="SSF50494">
    <property type="entry name" value="Trypsin-like serine proteases"/>
    <property type="match status" value="1"/>
</dbReference>
<dbReference type="PROSITE" id="PS50240">
    <property type="entry name" value="TRYPSIN_DOM"/>
    <property type="match status" value="1"/>
</dbReference>
<dbReference type="PROSITE" id="PS00134">
    <property type="entry name" value="TRYPSIN_HIS"/>
    <property type="match status" value="1"/>
</dbReference>
<dbReference type="PROSITE" id="PS00135">
    <property type="entry name" value="TRYPSIN_SER"/>
    <property type="match status" value="1"/>
</dbReference>
<accession>J3S832</accession>
<organism>
    <name type="scientific">Crotalus adamanteus</name>
    <name type="common">Eastern diamondback rattlesnake</name>
    <dbReference type="NCBI Taxonomy" id="8729"/>
    <lineage>
        <taxon>Eukaryota</taxon>
        <taxon>Metazoa</taxon>
        <taxon>Chordata</taxon>
        <taxon>Craniata</taxon>
        <taxon>Vertebrata</taxon>
        <taxon>Euteleostomi</taxon>
        <taxon>Lepidosauria</taxon>
        <taxon>Squamata</taxon>
        <taxon>Bifurcata</taxon>
        <taxon>Unidentata</taxon>
        <taxon>Episquamata</taxon>
        <taxon>Toxicofera</taxon>
        <taxon>Serpentes</taxon>
        <taxon>Colubroidea</taxon>
        <taxon>Viperidae</taxon>
        <taxon>Crotalinae</taxon>
        <taxon>Crotalus</taxon>
    </lineage>
</organism>
<reference key="1">
    <citation type="journal article" date="2012" name="BMC Genomics">
        <title>The venom-gland transcriptome of the eastern diamondback rattlesnake (Crotalus adamanteus).</title>
        <authorList>
            <person name="Rokyta D.R."/>
            <person name="Lemmon A.R."/>
            <person name="Margres M.J."/>
            <person name="Aronow K."/>
        </authorList>
    </citation>
    <scope>NUCLEOTIDE SEQUENCE [MRNA]</scope>
    <source>
        <tissue>Venom gland</tissue>
    </source>
</reference>
<reference key="2">
    <citation type="journal article" date="2014" name="J. Proteomics">
        <title>Linking the transcriptome and proteome to characterize the venom of the eastern diamondback rattlesnake (Crotalus adamanteus).</title>
        <authorList>
            <person name="Margres M.J."/>
            <person name="McGivern J.J."/>
            <person name="Wray K.P."/>
            <person name="Seavy M."/>
            <person name="Calvin K."/>
            <person name="Rokyta D.R."/>
        </authorList>
    </citation>
    <scope>IDENTIFICATION BY MASS SPECTROMETRY</scope>
    <source>
        <tissue>Venom</tissue>
    </source>
</reference>
<sequence>MVLIRVLANLLILQLSYAQKSSELVVGGDECNINEHRSLVLVYSDGIQCGGTLINQEWMLTAAHCDGKKMKLQFGLHSKKVPNKDKQTRVPKEKFFCLSSKNNKEWDKDIMLIRLNRPVNNSKHIAPLSLPSKPPSQDTVCNIMGWGTISPTEETYPDVPHCANINILDHAVCRAIYPGLLEKSRVLCAGILEGGKDTCGGDSGGPLICNGEIQGLLSVGGDPCAQPHVPALYIKVFDYTEWIQSIITGNTAATCPP</sequence>
<evidence type="ECO:0000250" key="1"/>
<evidence type="ECO:0000255" key="2"/>
<evidence type="ECO:0000255" key="3">
    <source>
        <dbReference type="PROSITE-ProRule" id="PRU00274"/>
    </source>
</evidence>
<proteinExistence type="evidence at protein level"/>